<feature type="chain" id="PRO_0000051002" description="Fizzy-related protein homolog">
    <location>
        <begin position="1"/>
        <end position="493"/>
    </location>
</feature>
<feature type="repeat" description="WD 1">
    <location>
        <begin position="182"/>
        <end position="222"/>
    </location>
</feature>
<feature type="repeat" description="WD 2">
    <location>
        <begin position="227"/>
        <end position="266"/>
    </location>
</feature>
<feature type="repeat" description="WD 3">
    <location>
        <begin position="269"/>
        <end position="306"/>
    </location>
</feature>
<feature type="repeat" description="WD 4">
    <location>
        <begin position="311"/>
        <end position="350"/>
    </location>
</feature>
<feature type="repeat" description="WD 5">
    <location>
        <begin position="353"/>
        <end position="395"/>
    </location>
</feature>
<feature type="repeat" description="WD 6">
    <location>
        <begin position="397"/>
        <end position="438"/>
    </location>
</feature>
<feature type="repeat" description="WD 7">
    <location>
        <begin position="441"/>
        <end position="480"/>
    </location>
</feature>
<feature type="region of interest" description="Disordered" evidence="2">
    <location>
        <begin position="31"/>
        <end position="51"/>
    </location>
</feature>
<feature type="region of interest" description="Disordered" evidence="2">
    <location>
        <begin position="64"/>
        <end position="88"/>
    </location>
</feature>
<feature type="region of interest" description="Disordered" evidence="2">
    <location>
        <begin position="105"/>
        <end position="166"/>
    </location>
</feature>
<feature type="compositionally biased region" description="Polar residues" evidence="2">
    <location>
        <begin position="32"/>
        <end position="42"/>
    </location>
</feature>
<feature type="compositionally biased region" description="Basic and acidic residues" evidence="2">
    <location>
        <begin position="76"/>
        <end position="86"/>
    </location>
</feature>
<feature type="compositionally biased region" description="Basic and acidic residues" evidence="2">
    <location>
        <begin position="106"/>
        <end position="126"/>
    </location>
</feature>
<feature type="compositionally biased region" description="Polar residues" evidence="2">
    <location>
        <begin position="146"/>
        <end position="160"/>
    </location>
</feature>
<feature type="modified residue" description="Phosphothreonine" evidence="1">
    <location>
        <position position="32"/>
    </location>
</feature>
<feature type="modified residue" description="Phosphoserine" evidence="5 6">
    <location>
        <position position="36"/>
    </location>
</feature>
<feature type="modified residue" description="N6-acetyllysine" evidence="1">
    <location>
        <position position="69"/>
    </location>
</feature>
<feature type="modified residue" description="Phosphoserine" evidence="1">
    <location>
        <position position="133"/>
    </location>
</feature>
<feature type="modified residue" description="Phosphoserine" evidence="6">
    <location>
        <position position="138"/>
    </location>
</feature>
<feature type="modified residue" description="Phosphoserine" evidence="6">
    <location>
        <position position="146"/>
    </location>
</feature>
<feature type="modified residue" description="Phosphoserine" evidence="5 6">
    <location>
        <position position="151"/>
    </location>
</feature>
<feature type="modified residue" description="N6-acetyllysine" evidence="1">
    <location>
        <position position="159"/>
    </location>
</feature>
<accession>Q9R1K5</accession>
<protein>
    <recommendedName>
        <fullName>Fizzy-related protein homolog</fullName>
        <shortName>Fzr</shortName>
    </recommendedName>
    <alternativeName>
        <fullName>Cdh1/Hct1 homolog</fullName>
    </alternativeName>
</protein>
<gene>
    <name type="primary">Fzr1</name>
    <name type="synonym">Fyr</name>
    <name type="synonym">Fzr</name>
</gene>
<proteinExistence type="evidence at protein level"/>
<sequence length="493" mass="54689">MDQDYERRLLRQIIIQNENTVPCVSEMRRTLTPANSPVSSPSKHGDRFIPSRAGANWSVNFHRINENEKSPSQNRKAKDATSDNGKDGLAYSALLKNELLGAGIEKVQDPQTEDRRLQPSTPEHKGLFTYSLSSKRSSPDDGNDVSPYSLSPVSNKSQKLLRSPRKPTRKISKIPFKVLDAPELQDDFYLNLVDWSSLNVLSVGLGTCVYLWSACTSQVTRLCDLSVEGDSVTSVGWSERGNLVAVGTHKGFVQIWDAAAGKKLSMLEGHTARVGALAWNADQLSSGSRDRMILQRDIRTPPLQSERRLQGHRQEVCGLKWSTDHQLLASGGNDNKLLVWNHSSLSPVQQYTEHLAAVKAIAWSPHQHGLLASGGGTADRCIRFWNTLTGQPLQCIDTGSQVCNLAWSKHANELVSTHGYSQNQILVWKYPSLTQVAKLTGHSYRVLYLAMSPDGEAIVTGAGDETLRFWNVFSKTRSTKESVSVLNLFTRIR</sequence>
<evidence type="ECO:0000250" key="1">
    <source>
        <dbReference type="UniProtKB" id="Q9UM11"/>
    </source>
</evidence>
<evidence type="ECO:0000256" key="2">
    <source>
        <dbReference type="SAM" id="MobiDB-lite"/>
    </source>
</evidence>
<evidence type="ECO:0000269" key="3">
    <source>
    </source>
</evidence>
<evidence type="ECO:0000305" key="4"/>
<evidence type="ECO:0007744" key="5">
    <source>
    </source>
</evidence>
<evidence type="ECO:0007744" key="6">
    <source>
    </source>
</evidence>
<name>FZR1_MOUSE</name>
<organism>
    <name type="scientific">Mus musculus</name>
    <name type="common">Mouse</name>
    <dbReference type="NCBI Taxonomy" id="10090"/>
    <lineage>
        <taxon>Eukaryota</taxon>
        <taxon>Metazoa</taxon>
        <taxon>Chordata</taxon>
        <taxon>Craniata</taxon>
        <taxon>Vertebrata</taxon>
        <taxon>Euteleostomi</taxon>
        <taxon>Mammalia</taxon>
        <taxon>Eutheria</taxon>
        <taxon>Euarchontoglires</taxon>
        <taxon>Glires</taxon>
        <taxon>Rodentia</taxon>
        <taxon>Myomorpha</taxon>
        <taxon>Muroidea</taxon>
        <taxon>Muridae</taxon>
        <taxon>Murinae</taxon>
        <taxon>Mus</taxon>
        <taxon>Mus</taxon>
    </lineage>
</organism>
<keyword id="KW-0007">Acetylation</keyword>
<keyword id="KW-0131">Cell cycle</keyword>
<keyword id="KW-0132">Cell division</keyword>
<keyword id="KW-0227">DNA damage</keyword>
<keyword id="KW-0234">DNA repair</keyword>
<keyword id="KW-0498">Mitosis</keyword>
<keyword id="KW-0597">Phosphoprotein</keyword>
<keyword id="KW-1185">Reference proteome</keyword>
<keyword id="KW-0677">Repeat</keyword>
<keyword id="KW-0833">Ubl conjugation pathway</keyword>
<keyword id="KW-0853">WD repeat</keyword>
<reference key="1">
    <citation type="journal article" date="2003" name="Biochem. J.">
        <title>Differential expression, localization and activity of two alternatively spliced isoforms of human APC regulator CDH1.</title>
        <authorList>
            <person name="Zhou Y."/>
            <person name="Ching Y.-P."/>
            <person name="Ng R.W.M."/>
            <person name="Jin D.-Y."/>
        </authorList>
    </citation>
    <scope>NUCLEOTIDE SEQUENCE [MRNA]</scope>
</reference>
<reference key="2">
    <citation type="journal article" date="2004" name="Genome Res.">
        <title>The status, quality, and expansion of the NIH full-length cDNA project: the Mammalian Gene Collection (MGC).</title>
        <authorList>
            <consortium name="The MGC Project Team"/>
        </authorList>
    </citation>
    <scope>NUCLEOTIDE SEQUENCE [LARGE SCALE MRNA]</scope>
</reference>
<reference key="3">
    <citation type="journal article" date="2007" name="Proc. Natl. Acad. Sci. U.S.A.">
        <title>Large-scale phosphorylation analysis of mouse liver.</title>
        <authorList>
            <person name="Villen J."/>
            <person name="Beausoleil S.A."/>
            <person name="Gerber S.A."/>
            <person name="Gygi S.P."/>
        </authorList>
    </citation>
    <scope>PHOSPHORYLATION [LARGE SCALE ANALYSIS] AT SER-36 AND SER-151</scope>
    <scope>IDENTIFICATION BY MASS SPECTROMETRY [LARGE SCALE ANALYSIS]</scope>
    <source>
        <tissue>Liver</tissue>
    </source>
</reference>
<reference key="4">
    <citation type="journal article" date="2010" name="Cell">
        <title>A tissue-specific atlas of mouse protein phosphorylation and expression.</title>
        <authorList>
            <person name="Huttlin E.L."/>
            <person name="Jedrychowski M.P."/>
            <person name="Elias J.E."/>
            <person name="Goswami T."/>
            <person name="Rad R."/>
            <person name="Beausoleil S.A."/>
            <person name="Villen J."/>
            <person name="Haas W."/>
            <person name="Sowa M.E."/>
            <person name="Gygi S.P."/>
        </authorList>
    </citation>
    <scope>PHOSPHORYLATION [LARGE SCALE ANALYSIS] AT SER-36; SER-138; SER-146 AND SER-151</scope>
    <scope>IDENTIFICATION BY MASS SPECTROMETRY [LARGE SCALE ANALYSIS]</scope>
    <source>
        <tissue>Lung</tissue>
        <tissue>Spleen</tissue>
        <tissue>Testis</tissue>
    </source>
</reference>
<reference key="5">
    <citation type="journal article" date="2011" name="Cancer Cell">
        <title>SIRT2 maintains genome integrity and suppresses tumorigenesis through regulating APC/C activity.</title>
        <authorList>
            <person name="Kim H.S."/>
            <person name="Vassilopoulos A."/>
            <person name="Wang R.H."/>
            <person name="Lahusen T."/>
            <person name="Xiao Z."/>
            <person name="Xu X."/>
            <person name="Li C."/>
            <person name="Veenstra T.D."/>
            <person name="Li B."/>
            <person name="Yu H."/>
            <person name="Ji J."/>
            <person name="Wang X.W."/>
            <person name="Park S.H."/>
            <person name="Cha Y.I."/>
            <person name="Gius D."/>
            <person name="Deng C.X."/>
        </authorList>
    </citation>
    <scope>DEACETYLATION BY SIRT2</scope>
    <scope>INTERACTION WITH SIRT2</scope>
</reference>
<comment type="function">
    <text evidence="1">Substrate-specific adapter for the anaphase promoting complex/cyclosome (APC/C) E3 ubiquitin-protein ligase complex. Associates with the APC/C in late mitosis, in replacement of CDC20, and activates the APC/C during anaphase and telophase. The APC/C remains active in degrading substrates to ensure that positive regulators of the cell cycle do not accumulate prematurely. At the G1/S transition FZR1 is phosphorylated, leading to its dissociation from the APC/C. Following DNA damage, it is required for the G2 DNA damage checkpoint: its dephosphorylation and reassociation with the APC/C leads to the ubiquitination of PLK1, preventing entry into mitosis. Acts as an adapter for APC/C to target the DNA-end resection factor RBBP8/CtIP for ubiquitination and subsequent proteasomal degradation. Through the regulation of RBBP8/CtIP protein turnover, may play a role in DNA damage response, favoring DNA double-strand repair through error-prone non-homologous end joining (NHEJ) over error-free, RBBP8-mediated homologous recombination (HR).</text>
</comment>
<comment type="pathway">
    <text>Protein modification; protein ubiquitination.</text>
</comment>
<comment type="subunit">
    <text evidence="1 3">The unphosphorylated form interacts with APC/C during mitosis. Interacts with NINL. Interacts (in complex with the anaphase promoting complex APC) with MAD2L2; inhibits FZR1-mediated APC/C activation (By similarity). Interacts with SIRT2 (PubMed:22014574). Interacts with USP37. Interacts (via WD repeats) with MAK. Interacts with RBBP8/CtIP; this interaction leads to RBBP8 proteasomal degradation. Interacts with HECW2 (By similarity). Interacts with SASS6; the interaction is regulated by CENATAC and leads to SASS6 proteasomal degradation (By similarity). Interacts (via N-terminus) with CCNF (By similarity). Interacts with CDC6 (By similarity). Interacts with TK1 (via the KEN box) (By similarity).</text>
</comment>
<comment type="interaction">
    <interactant intactId="EBI-5238560">
        <id>Q9R1K5</id>
    </interactant>
    <interactant intactId="EBI-911012">
        <id>Q8VDQ8</id>
        <label>Sirt2</label>
    </interactant>
    <organismsDiffer>false</organismsDiffer>
    <experiments>2</experiments>
</comment>
<comment type="PTM">
    <text>Acetylated. Deacetylated by SIRT2 at Lys-69 and Lys-159; deacetylation enhances the interaction of FZR1 with CDC27, leading to activation of anaphase promoting complex/cyclosome (APC/C).</text>
</comment>
<comment type="PTM">
    <text evidence="1">Following DNA damage, it is dephosphorylated by CDC14B in G2 phase, leading to its reassociation with the APC/C, and allowing an efficient G2 DNA damage checkpoint (By similarity). Phosphorylated by MAK (By similarity).</text>
</comment>
<comment type="similarity">
    <text evidence="4">Belongs to the WD repeat CDC20/Fizzy family.</text>
</comment>
<dbReference type="EMBL" id="AF083809">
    <property type="protein sequence ID" value="AAD52029.1"/>
    <property type="molecule type" value="mRNA"/>
</dbReference>
<dbReference type="EMBL" id="BC006616">
    <property type="protein sequence ID" value="AAH06616.1"/>
    <property type="molecule type" value="mRNA"/>
</dbReference>
<dbReference type="CCDS" id="CCDS24057.1"/>
<dbReference type="RefSeq" id="NP_062731.1">
    <property type="nucleotide sequence ID" value="NM_019757.1"/>
</dbReference>
<dbReference type="SMR" id="Q9R1K5"/>
<dbReference type="BioGRID" id="207933">
    <property type="interactions" value="194"/>
</dbReference>
<dbReference type="FunCoup" id="Q9R1K5">
    <property type="interactions" value="2945"/>
</dbReference>
<dbReference type="IntAct" id="Q9R1K5">
    <property type="interactions" value="1"/>
</dbReference>
<dbReference type="STRING" id="10090.ENSMUSP00000114203"/>
<dbReference type="iPTMnet" id="Q9R1K5"/>
<dbReference type="PhosphoSitePlus" id="Q9R1K5"/>
<dbReference type="PaxDb" id="10090-ENSMUSP00000114203"/>
<dbReference type="ProteomicsDB" id="267503"/>
<dbReference type="Pumba" id="Q9R1K5"/>
<dbReference type="Antibodypedia" id="11031">
    <property type="antibodies" value="349 antibodies from 35 providers"/>
</dbReference>
<dbReference type="DNASU" id="56371"/>
<dbReference type="Ensembl" id="ENSMUST00000140901.8">
    <property type="protein sequence ID" value="ENSMUSP00000114203.2"/>
    <property type="gene ID" value="ENSMUSG00000020235.17"/>
</dbReference>
<dbReference type="GeneID" id="56371"/>
<dbReference type="KEGG" id="mmu:56371"/>
<dbReference type="UCSC" id="uc007ght.1">
    <property type="organism name" value="mouse"/>
</dbReference>
<dbReference type="AGR" id="MGI:1926790"/>
<dbReference type="CTD" id="51343"/>
<dbReference type="MGI" id="MGI:1926790">
    <property type="gene designation" value="Fzr1"/>
</dbReference>
<dbReference type="VEuPathDB" id="HostDB:ENSMUSG00000020235"/>
<dbReference type="eggNOG" id="KOG0305">
    <property type="taxonomic scope" value="Eukaryota"/>
</dbReference>
<dbReference type="GeneTree" id="ENSGT00950000183104"/>
<dbReference type="HOGENOM" id="CLU_014831_4_2_1"/>
<dbReference type="InParanoid" id="Q9R1K5"/>
<dbReference type="OMA" id="FHHEYEK"/>
<dbReference type="OrthoDB" id="10263272at2759"/>
<dbReference type="PhylomeDB" id="Q9R1K5"/>
<dbReference type="TreeFam" id="TF101066"/>
<dbReference type="Reactome" id="R-MMU-174084">
    <property type="pathway name" value="Autodegradation of Cdh1 by Cdh1:APC/C"/>
</dbReference>
<dbReference type="Reactome" id="R-MMU-174113">
    <property type="pathway name" value="SCF-beta-TrCP mediated degradation of Emi1"/>
</dbReference>
<dbReference type="Reactome" id="R-MMU-174178">
    <property type="pathway name" value="APC/C:Cdh1 mediated degradation of Cdc20 and other APC/C:Cdh1 targeted proteins in late mitosis/early G1"/>
</dbReference>
<dbReference type="Reactome" id="R-MMU-176407">
    <property type="pathway name" value="Conversion from APC/C:Cdc20 to APC/C:Cdh1 in late anaphase"/>
</dbReference>
<dbReference type="Reactome" id="R-MMU-176408">
    <property type="pathway name" value="Regulation of APC/C activators between G1/S and early anaphase"/>
</dbReference>
<dbReference type="Reactome" id="R-MMU-176417">
    <property type="pathway name" value="Phosphorylation of Emi1"/>
</dbReference>
<dbReference type="Reactome" id="R-MMU-2559582">
    <property type="pathway name" value="Senescence-Associated Secretory Phenotype (SASP)"/>
</dbReference>
<dbReference type="Reactome" id="R-MMU-68867">
    <property type="pathway name" value="Assembly of the pre-replicative complex"/>
</dbReference>
<dbReference type="Reactome" id="R-MMU-69017">
    <property type="pathway name" value="CDK-mediated phosphorylation and removal of Cdc6"/>
</dbReference>
<dbReference type="Reactome" id="R-MMU-69656">
    <property type="pathway name" value="Cyclin A:Cdk2-associated events at S phase entry"/>
</dbReference>
<dbReference type="Reactome" id="R-MMU-983168">
    <property type="pathway name" value="Antigen processing: Ubiquitination &amp; Proteasome degradation"/>
</dbReference>
<dbReference type="UniPathway" id="UPA00143"/>
<dbReference type="BioGRID-ORCS" id="56371">
    <property type="hits" value="19 hits in 114 CRISPR screens"/>
</dbReference>
<dbReference type="ChiTaRS" id="Fzr1">
    <property type="organism name" value="mouse"/>
</dbReference>
<dbReference type="PRO" id="PR:Q9R1K5"/>
<dbReference type="Proteomes" id="UP000000589">
    <property type="component" value="Chromosome 10"/>
</dbReference>
<dbReference type="RNAct" id="Q9R1K5">
    <property type="molecule type" value="protein"/>
</dbReference>
<dbReference type="Bgee" id="ENSMUSG00000020235">
    <property type="expression patterns" value="Expressed in dorsal pancreas and 273 other cell types or tissues"/>
</dbReference>
<dbReference type="ExpressionAtlas" id="Q9R1K5">
    <property type="expression patterns" value="baseline and differential"/>
</dbReference>
<dbReference type="GO" id="GO:0031965">
    <property type="term" value="C:nuclear membrane"/>
    <property type="evidence" value="ECO:0007669"/>
    <property type="project" value="Ensembl"/>
</dbReference>
<dbReference type="GO" id="GO:0005654">
    <property type="term" value="C:nucleoplasm"/>
    <property type="evidence" value="ECO:0007669"/>
    <property type="project" value="Ensembl"/>
</dbReference>
<dbReference type="GO" id="GO:0010997">
    <property type="term" value="F:anaphase-promoting complex binding"/>
    <property type="evidence" value="ECO:0007669"/>
    <property type="project" value="InterPro"/>
</dbReference>
<dbReference type="GO" id="GO:1990756">
    <property type="term" value="F:ubiquitin-like ligase-substrate adaptor activity"/>
    <property type="evidence" value="ECO:0007669"/>
    <property type="project" value="Ensembl"/>
</dbReference>
<dbReference type="GO" id="GO:0097027">
    <property type="term" value="F:ubiquitin-protein transferase activator activity"/>
    <property type="evidence" value="ECO:0007669"/>
    <property type="project" value="InterPro"/>
</dbReference>
<dbReference type="GO" id="GO:0031145">
    <property type="term" value="P:anaphase-promoting complex-dependent catabolic process"/>
    <property type="evidence" value="ECO:0000250"/>
    <property type="project" value="UniProtKB"/>
</dbReference>
<dbReference type="GO" id="GO:0051301">
    <property type="term" value="P:cell division"/>
    <property type="evidence" value="ECO:0007669"/>
    <property type="project" value="UniProtKB-KW"/>
</dbReference>
<dbReference type="GO" id="GO:0006281">
    <property type="term" value="P:DNA repair"/>
    <property type="evidence" value="ECO:0007669"/>
    <property type="project" value="UniProtKB-KW"/>
</dbReference>
<dbReference type="GO" id="GO:0070306">
    <property type="term" value="P:lens fiber cell differentiation"/>
    <property type="evidence" value="ECO:0000315"/>
    <property type="project" value="MGI"/>
</dbReference>
<dbReference type="GO" id="GO:0007095">
    <property type="term" value="P:mitotic G2 DNA damage checkpoint signaling"/>
    <property type="evidence" value="ECO:0000250"/>
    <property type="project" value="UniProtKB"/>
</dbReference>
<dbReference type="GO" id="GO:2000773">
    <property type="term" value="P:negative regulation of cellular senescence"/>
    <property type="evidence" value="ECO:0000315"/>
    <property type="project" value="BHF-UCL"/>
</dbReference>
<dbReference type="GO" id="GO:0008284">
    <property type="term" value="P:positive regulation of cell population proliferation"/>
    <property type="evidence" value="ECO:0000315"/>
    <property type="project" value="BHF-UCL"/>
</dbReference>
<dbReference type="GO" id="GO:1904668">
    <property type="term" value="P:positive regulation of ubiquitin protein ligase activity"/>
    <property type="evidence" value="ECO:0000250"/>
    <property type="project" value="UniProtKB"/>
</dbReference>
<dbReference type="GO" id="GO:0016567">
    <property type="term" value="P:protein ubiquitination"/>
    <property type="evidence" value="ECO:0007669"/>
    <property type="project" value="UniProtKB-UniPathway"/>
</dbReference>
<dbReference type="GO" id="GO:0051603">
    <property type="term" value="P:proteolysis involved in protein catabolic process"/>
    <property type="evidence" value="ECO:0000315"/>
    <property type="project" value="MGI"/>
</dbReference>
<dbReference type="GO" id="GO:0040020">
    <property type="term" value="P:regulation of meiotic nuclear division"/>
    <property type="evidence" value="ECO:0000314"/>
    <property type="project" value="MGI"/>
</dbReference>
<dbReference type="CDD" id="cd00200">
    <property type="entry name" value="WD40"/>
    <property type="match status" value="1"/>
</dbReference>
<dbReference type="FunFam" id="2.130.10.10:FF:000025">
    <property type="entry name" value="FIZZY-related 2 isoform 1"/>
    <property type="match status" value="1"/>
</dbReference>
<dbReference type="Gene3D" id="2.130.10.10">
    <property type="entry name" value="YVTN repeat-like/Quinoprotein amine dehydrogenase"/>
    <property type="match status" value="1"/>
</dbReference>
<dbReference type="InterPro" id="IPR033010">
    <property type="entry name" value="Cdc20/Fizzy"/>
</dbReference>
<dbReference type="InterPro" id="IPR015943">
    <property type="entry name" value="WD40/YVTN_repeat-like_dom_sf"/>
</dbReference>
<dbReference type="InterPro" id="IPR056150">
    <property type="entry name" value="WD40_CDC20-Fz"/>
</dbReference>
<dbReference type="InterPro" id="IPR019775">
    <property type="entry name" value="WD40_repeat_CS"/>
</dbReference>
<dbReference type="InterPro" id="IPR036322">
    <property type="entry name" value="WD40_repeat_dom_sf"/>
</dbReference>
<dbReference type="InterPro" id="IPR001680">
    <property type="entry name" value="WD40_rpt"/>
</dbReference>
<dbReference type="PANTHER" id="PTHR19918">
    <property type="entry name" value="CELL DIVISION CYCLE 20 CDC20 FIZZY -RELATED"/>
    <property type="match status" value="1"/>
</dbReference>
<dbReference type="PANTHER" id="PTHR19918:SF1">
    <property type="entry name" value="FIZZY-RELATED PROTEIN HOMOLOG"/>
    <property type="match status" value="1"/>
</dbReference>
<dbReference type="Pfam" id="PF24807">
    <property type="entry name" value="WD40_CDC20-Fz"/>
    <property type="match status" value="1"/>
</dbReference>
<dbReference type="SMART" id="SM00320">
    <property type="entry name" value="WD40"/>
    <property type="match status" value="6"/>
</dbReference>
<dbReference type="SUPFAM" id="SSF50978">
    <property type="entry name" value="WD40 repeat-like"/>
    <property type="match status" value="1"/>
</dbReference>
<dbReference type="PROSITE" id="PS00678">
    <property type="entry name" value="WD_REPEATS_1"/>
    <property type="match status" value="2"/>
</dbReference>
<dbReference type="PROSITE" id="PS50082">
    <property type="entry name" value="WD_REPEATS_2"/>
    <property type="match status" value="3"/>
</dbReference>
<dbReference type="PROSITE" id="PS50294">
    <property type="entry name" value="WD_REPEATS_REGION"/>
    <property type="match status" value="1"/>
</dbReference>